<comment type="catalytic activity">
    <reaction>
        <text>[thioredoxin]-dithiol + NADP(+) = [thioredoxin]-disulfide + NADPH + H(+)</text>
        <dbReference type="Rhea" id="RHEA:20345"/>
        <dbReference type="Rhea" id="RHEA-COMP:10698"/>
        <dbReference type="Rhea" id="RHEA-COMP:10700"/>
        <dbReference type="ChEBI" id="CHEBI:15378"/>
        <dbReference type="ChEBI" id="CHEBI:29950"/>
        <dbReference type="ChEBI" id="CHEBI:50058"/>
        <dbReference type="ChEBI" id="CHEBI:57783"/>
        <dbReference type="ChEBI" id="CHEBI:58349"/>
        <dbReference type="EC" id="1.8.1.9"/>
    </reaction>
</comment>
<comment type="cofactor">
    <cofactor evidence="1">
        <name>FAD</name>
        <dbReference type="ChEBI" id="CHEBI:57692"/>
    </cofactor>
    <text evidence="1">Binds 1 FAD per subunit.</text>
</comment>
<comment type="subunit">
    <text evidence="1">Homodimer.</text>
</comment>
<comment type="subcellular location">
    <subcellularLocation>
        <location evidence="1">Cytoplasm</location>
    </subcellularLocation>
</comment>
<comment type="miscellaneous">
    <text>The active site is a redox-active disulfide bond.</text>
</comment>
<comment type="similarity">
    <text evidence="2">Belongs to the class-II pyridine nucleotide-disulfide oxidoreductase family.</text>
</comment>
<feature type="chain" id="PRO_0000166769" description="Thioredoxin reductase">
    <location>
        <begin position="1"/>
        <end position="319"/>
    </location>
</feature>
<feature type="binding site" evidence="1">
    <location>
        <begin position="11"/>
        <end position="14"/>
    </location>
    <ligand>
        <name>FAD</name>
        <dbReference type="ChEBI" id="CHEBI:57692"/>
    </ligand>
</feature>
<feature type="binding site" evidence="1">
    <location>
        <begin position="40"/>
        <end position="41"/>
    </location>
    <ligand>
        <name>FAD</name>
        <dbReference type="ChEBI" id="CHEBI:57692"/>
    </ligand>
</feature>
<feature type="binding site" evidence="1">
    <location>
        <position position="45"/>
    </location>
    <ligand>
        <name>FAD</name>
        <dbReference type="ChEBI" id="CHEBI:57692"/>
    </ligand>
</feature>
<feature type="binding site" evidence="1">
    <location>
        <position position="54"/>
    </location>
    <ligand>
        <name>FAD</name>
        <dbReference type="ChEBI" id="CHEBI:57692"/>
    </ligand>
</feature>
<feature type="binding site" evidence="1">
    <location>
        <position position="87"/>
    </location>
    <ligand>
        <name>FAD</name>
        <dbReference type="ChEBI" id="CHEBI:57692"/>
    </ligand>
</feature>
<feature type="binding site" evidence="1">
    <location>
        <position position="145"/>
    </location>
    <ligand>
        <name>FAD</name>
        <dbReference type="ChEBI" id="CHEBI:57692"/>
    </ligand>
</feature>
<feature type="binding site" evidence="1">
    <location>
        <position position="288"/>
    </location>
    <ligand>
        <name>FAD</name>
        <dbReference type="ChEBI" id="CHEBI:57692"/>
    </ligand>
</feature>
<feature type="binding site" evidence="1">
    <location>
        <begin position="295"/>
        <end position="297"/>
    </location>
    <ligand>
        <name>FAD</name>
        <dbReference type="ChEBI" id="CHEBI:57692"/>
    </ligand>
</feature>
<feature type="disulfide bond" description="Redox-active" evidence="1">
    <location>
        <begin position="142"/>
        <end position="145"/>
    </location>
</feature>
<keyword id="KW-0963">Cytoplasm</keyword>
<keyword id="KW-1015">Disulfide bond</keyword>
<keyword id="KW-0274">FAD</keyword>
<keyword id="KW-0285">Flavoprotein</keyword>
<keyword id="KW-0521">NADP</keyword>
<keyword id="KW-0560">Oxidoreductase</keyword>
<keyword id="KW-0676">Redox-active center</keyword>
<keyword id="KW-1185">Reference proteome</keyword>
<sequence>MTHSPVVIIGSGPAAHTAAIYLSRAEIKPTLYEGMMANGIAAGGQLTTTTEIENFPGFPDGIMGSQLMEDMRKQSIRFGTEIITETVSKVDLSQRPFKYWTEFNEDEEPHTADAIILATGASAKRLSLPGEDQYWQQGISACAVCDGAVPIFRNKPLAVVGGGDSAAEEALFLTKYGSKVYVIVRKDKLRASAVMAKRLASHPKVEILFNHVSIEAKGDGKLLNALEIENTLTGEKRDLEVNGLFYAIGHIPATSIVKGQVETDEEGYVVTVPGTANTSVKGVFAAGDVQDKRYRQAITSAGTGCMAALDCEKLLAEEE</sequence>
<organism>
    <name type="scientific">Yarrowia lipolytica (strain CLIB 122 / E 150)</name>
    <name type="common">Yeast</name>
    <name type="synonym">Candida lipolytica</name>
    <dbReference type="NCBI Taxonomy" id="284591"/>
    <lineage>
        <taxon>Eukaryota</taxon>
        <taxon>Fungi</taxon>
        <taxon>Dikarya</taxon>
        <taxon>Ascomycota</taxon>
        <taxon>Saccharomycotina</taxon>
        <taxon>Dipodascomycetes</taxon>
        <taxon>Dipodascales</taxon>
        <taxon>Dipodascales incertae sedis</taxon>
        <taxon>Yarrowia</taxon>
    </lineage>
</organism>
<protein>
    <recommendedName>
        <fullName>Thioredoxin reductase</fullName>
        <ecNumber>1.8.1.9</ecNumber>
    </recommendedName>
</protein>
<gene>
    <name type="primary">TRR1</name>
    <name type="ordered locus">YALI0D27126g</name>
</gene>
<evidence type="ECO:0000250" key="1">
    <source>
        <dbReference type="UniProtKB" id="P29509"/>
    </source>
</evidence>
<evidence type="ECO:0000305" key="2"/>
<accession>Q6C7L4</accession>
<reference key="1">
    <citation type="journal article" date="2004" name="Nature">
        <title>Genome evolution in yeasts.</title>
        <authorList>
            <person name="Dujon B."/>
            <person name="Sherman D."/>
            <person name="Fischer G."/>
            <person name="Durrens P."/>
            <person name="Casaregola S."/>
            <person name="Lafontaine I."/>
            <person name="de Montigny J."/>
            <person name="Marck C."/>
            <person name="Neuveglise C."/>
            <person name="Talla E."/>
            <person name="Goffard N."/>
            <person name="Frangeul L."/>
            <person name="Aigle M."/>
            <person name="Anthouard V."/>
            <person name="Babour A."/>
            <person name="Barbe V."/>
            <person name="Barnay S."/>
            <person name="Blanchin S."/>
            <person name="Beckerich J.-M."/>
            <person name="Beyne E."/>
            <person name="Bleykasten C."/>
            <person name="Boisrame A."/>
            <person name="Boyer J."/>
            <person name="Cattolico L."/>
            <person name="Confanioleri F."/>
            <person name="de Daruvar A."/>
            <person name="Despons L."/>
            <person name="Fabre E."/>
            <person name="Fairhead C."/>
            <person name="Ferry-Dumazet H."/>
            <person name="Groppi A."/>
            <person name="Hantraye F."/>
            <person name="Hennequin C."/>
            <person name="Jauniaux N."/>
            <person name="Joyet P."/>
            <person name="Kachouri R."/>
            <person name="Kerrest A."/>
            <person name="Koszul R."/>
            <person name="Lemaire M."/>
            <person name="Lesur I."/>
            <person name="Ma L."/>
            <person name="Muller H."/>
            <person name="Nicaud J.-M."/>
            <person name="Nikolski M."/>
            <person name="Oztas S."/>
            <person name="Ozier-Kalogeropoulos O."/>
            <person name="Pellenz S."/>
            <person name="Potier S."/>
            <person name="Richard G.-F."/>
            <person name="Straub M.-L."/>
            <person name="Suleau A."/>
            <person name="Swennen D."/>
            <person name="Tekaia F."/>
            <person name="Wesolowski-Louvel M."/>
            <person name="Westhof E."/>
            <person name="Wirth B."/>
            <person name="Zeniou-Meyer M."/>
            <person name="Zivanovic Y."/>
            <person name="Bolotin-Fukuhara M."/>
            <person name="Thierry A."/>
            <person name="Bouchier C."/>
            <person name="Caudron B."/>
            <person name="Scarpelli C."/>
            <person name="Gaillardin C."/>
            <person name="Weissenbach J."/>
            <person name="Wincker P."/>
            <person name="Souciet J.-L."/>
        </authorList>
    </citation>
    <scope>NUCLEOTIDE SEQUENCE [LARGE SCALE GENOMIC DNA]</scope>
    <source>
        <strain>CLIB 122 / E 150</strain>
    </source>
</reference>
<dbReference type="EC" id="1.8.1.9"/>
<dbReference type="EMBL" id="CR382130">
    <property type="protein sequence ID" value="CAG81554.1"/>
    <property type="molecule type" value="Genomic_DNA"/>
</dbReference>
<dbReference type="RefSeq" id="XP_503348.1">
    <property type="nucleotide sequence ID" value="XM_503348.1"/>
</dbReference>
<dbReference type="SMR" id="Q6C7L4"/>
<dbReference type="FunCoup" id="Q6C7L4">
    <property type="interactions" value="253"/>
</dbReference>
<dbReference type="STRING" id="284591.Q6C7L4"/>
<dbReference type="EnsemblFungi" id="CAG81554">
    <property type="protein sequence ID" value="CAG81554"/>
    <property type="gene ID" value="YALI0_D27126g"/>
</dbReference>
<dbReference type="KEGG" id="yli:2911244"/>
<dbReference type="VEuPathDB" id="FungiDB:YALI0_D27126g"/>
<dbReference type="HOGENOM" id="CLU_031864_5_1_1"/>
<dbReference type="InParanoid" id="Q6C7L4"/>
<dbReference type="OMA" id="GPCHVLK"/>
<dbReference type="OrthoDB" id="14122at4891"/>
<dbReference type="Proteomes" id="UP000001300">
    <property type="component" value="Chromosome D"/>
</dbReference>
<dbReference type="GO" id="GO:0005829">
    <property type="term" value="C:cytosol"/>
    <property type="evidence" value="ECO:0000318"/>
    <property type="project" value="GO_Central"/>
</dbReference>
<dbReference type="GO" id="GO:0004791">
    <property type="term" value="F:thioredoxin-disulfide reductase (NADPH) activity"/>
    <property type="evidence" value="ECO:0000318"/>
    <property type="project" value="GO_Central"/>
</dbReference>
<dbReference type="GO" id="GO:0045454">
    <property type="term" value="P:cell redox homeostasis"/>
    <property type="evidence" value="ECO:0000318"/>
    <property type="project" value="GO_Central"/>
</dbReference>
<dbReference type="GO" id="GO:0019430">
    <property type="term" value="P:removal of superoxide radicals"/>
    <property type="evidence" value="ECO:0007669"/>
    <property type="project" value="InterPro"/>
</dbReference>
<dbReference type="FunFam" id="3.50.50.60:FF:000064">
    <property type="entry name" value="Thioredoxin reductase"/>
    <property type="match status" value="1"/>
</dbReference>
<dbReference type="Gene3D" id="3.50.50.60">
    <property type="entry name" value="FAD/NAD(P)-binding domain"/>
    <property type="match status" value="2"/>
</dbReference>
<dbReference type="InterPro" id="IPR036188">
    <property type="entry name" value="FAD/NAD-bd_sf"/>
</dbReference>
<dbReference type="InterPro" id="IPR023753">
    <property type="entry name" value="FAD/NAD-binding_dom"/>
</dbReference>
<dbReference type="InterPro" id="IPR050097">
    <property type="entry name" value="Ferredoxin-NADP_redctase_2"/>
</dbReference>
<dbReference type="InterPro" id="IPR008255">
    <property type="entry name" value="Pyr_nucl-diS_OxRdtase_2_AS"/>
</dbReference>
<dbReference type="InterPro" id="IPR005982">
    <property type="entry name" value="Thioredox_Rdtase"/>
</dbReference>
<dbReference type="NCBIfam" id="TIGR01292">
    <property type="entry name" value="TRX_reduct"/>
    <property type="match status" value="1"/>
</dbReference>
<dbReference type="PANTHER" id="PTHR48105">
    <property type="entry name" value="THIOREDOXIN REDUCTASE 1-RELATED-RELATED"/>
    <property type="match status" value="1"/>
</dbReference>
<dbReference type="Pfam" id="PF07992">
    <property type="entry name" value="Pyr_redox_2"/>
    <property type="match status" value="1"/>
</dbReference>
<dbReference type="PRINTS" id="PR00368">
    <property type="entry name" value="FADPNR"/>
</dbReference>
<dbReference type="PRINTS" id="PR00469">
    <property type="entry name" value="PNDRDTASEII"/>
</dbReference>
<dbReference type="SUPFAM" id="SSF51905">
    <property type="entry name" value="FAD/NAD(P)-binding domain"/>
    <property type="match status" value="1"/>
</dbReference>
<dbReference type="PROSITE" id="PS00573">
    <property type="entry name" value="PYRIDINE_REDOX_2"/>
    <property type="match status" value="1"/>
</dbReference>
<name>TRXB_YARLI</name>
<proteinExistence type="inferred from homology"/>